<name>BOA12_BOTFB</name>
<evidence type="ECO:0000269" key="1">
    <source>
    </source>
</evidence>
<evidence type="ECO:0000269" key="2">
    <source>
    </source>
</evidence>
<evidence type="ECO:0000303" key="3">
    <source>
    </source>
</evidence>
<evidence type="ECO:0000305" key="4">
    <source>
    </source>
</evidence>
<evidence type="ECO:0000305" key="5">
    <source>
    </source>
</evidence>
<protein>
    <recommendedName>
        <fullName evidence="3">Botcinic acid biosynthesis cluster B protein 12</fullName>
    </recommendedName>
</protein>
<organism>
    <name type="scientific">Botryotinia fuckeliana (strain B05.10)</name>
    <name type="common">Noble rot fungus</name>
    <name type="synonym">Botrytis cinerea</name>
    <dbReference type="NCBI Taxonomy" id="332648"/>
    <lineage>
        <taxon>Eukaryota</taxon>
        <taxon>Fungi</taxon>
        <taxon>Dikarya</taxon>
        <taxon>Ascomycota</taxon>
        <taxon>Pezizomycotina</taxon>
        <taxon>Leotiomycetes</taxon>
        <taxon>Helotiales</taxon>
        <taxon>Sclerotiniaceae</taxon>
        <taxon>Botrytis</taxon>
    </lineage>
</organism>
<accession>G0LET8</accession>
<keyword id="KW-0843">Virulence</keyword>
<sequence length="220" mass="24642">MTSHRSESKATIKVRPPPSFIGGVQDKSWTPTPENWLYGAWYMTHTSQQYYWERTKNFVIQYEPVMNGVWPCTNQELVSLTPLNQPERIYTAFGIDSPIAGLDDAWLCQCTGHLSHISDHVAFLAWGADLQNVDWVVLYSTPLPGATVGLPAQVAIMSRERFGPDNTMVEAIKEALCAAGNSELTKLVDNLRPLLQEDLGSGRPTCEYHVVQNVDSLTRF</sequence>
<feature type="chain" id="PRO_0000444649" description="Botcinic acid biosynthesis cluster B protein 12">
    <location>
        <begin position="1"/>
        <end position="220"/>
    </location>
</feature>
<dbReference type="EMBL" id="FR718879">
    <property type="protein sequence ID" value="CBX87033.1"/>
    <property type="molecule type" value="Genomic_DNA"/>
</dbReference>
<dbReference type="SMR" id="G0LET8"/>
<dbReference type="EnsemblFungi" id="Bcin01g00120.1">
    <property type="protein sequence ID" value="Bcin01p00120.1"/>
    <property type="gene ID" value="Bcin01g00120"/>
</dbReference>
<dbReference type="VEuPathDB" id="FungiDB:Bcin01g00120"/>
<dbReference type="OrthoDB" id="9975758at2759"/>
<gene>
    <name evidence="3" type="primary">BOA12</name>
</gene>
<reference key="1">
    <citation type="journal article" date="2011" name="Mol. Plant Pathol.">
        <title>The Botrytis cinerea phytotoxin botcinic acid requires two polyketide synthases for production and has a redundant role in virulence with botrydial.</title>
        <authorList>
            <person name="Dalmais B."/>
            <person name="Schumacher J."/>
            <person name="Moraga J."/>
            <person name="Le Pecheur P."/>
            <person name="Tudzynski B."/>
            <person name="Collado I.G."/>
            <person name="Viaud M."/>
        </authorList>
    </citation>
    <scope>NUCLEOTIDE SEQUENCE [GENOMIC DNA]</scope>
    <scope>FUNCTION</scope>
    <scope>INDUCTION</scope>
    <scope>PATHWAY</scope>
    <source>
        <strain>B05.10</strain>
    </source>
</reference>
<reference key="2">
    <citation type="journal article" date="2013" name="ChemBioChem">
        <title>A shared biosynthetic pathway for botcinins and botrylactones revealed through gene deletions.</title>
        <authorList>
            <person name="Massaroli M."/>
            <person name="Moraga J."/>
            <person name="Bastos Borges K."/>
            <person name="Ramirez-Fernandez J."/>
            <person name="Viaud M."/>
            <person name="Gonzalez Collado I."/>
            <person name="Duran-Patron R."/>
            <person name="Hernandez-Galan R."/>
        </authorList>
    </citation>
    <scope>FUNCTION</scope>
</reference>
<comment type="function">
    <text evidence="1 2 5">Part of the gene cluster B that mediates the biosynthesis of botcinic acid and its botcinin derivatives, acetate-derived polyketides that contribute to virulence when combined with the sesquiterpene botrydial (PubMed:21722295). Botcinic acid and its derivatives have been shown to induce chlorosis and necrosis during host plant infection, but also have antifungal activities (PubMed:21722295). Two polyketide synthases, BOA6 and BOA9, are involved in the biosynthesis of botcinins. BOA6 mediates the formation of the per-methylated tetraketide core by condensation of four units of malonyl-CoA with one unit of acetyl-CoA, which would be methylated in activated methylene groups to yield a bicyclic acid intermediate that could then either be converted to botrylactone derivatives or lose the starter acetate unit through a retro-Claisen type C-C bond cleavage to yield botcinin derivatives (PubMed:23203902). The second polyketide synthase, BOA9, is probably required for the biosynthesis of the tetraketide side chain of botcinins (Probable). The methyltransferase (MT) domain within BOA6 is probably responsible for the incorporation of four methyl groups (Probable). The trans-enoyl reductase BOA5 might take over the enoyl reductase function of BOA6 that misses an ER domain (Probable). The monooxygenases BOA2, BOA3 and BOA4 might be involved in further hydroxylations at C4, C5 and C8, whereas BOA7, close to BOA9, could potentially be involved in the hydroxylation at C4 in the side chain of botcinins (Probable).</text>
</comment>
<comment type="pathway">
    <text evidence="4">Polyketide biosynthesis.</text>
</comment>
<comment type="induction">
    <text evidence="1">Expression of the botcinic acid clusters genes BOA1-13 and BOA17 is coregulated by BCG1 during both in vitro and in planta growth.</text>
</comment>
<proteinExistence type="evidence at transcript level"/>